<keyword id="KW-0945">Host-virus interaction</keyword>
<keyword id="KW-1090">Inhibition of host innate immune response by virus</keyword>
<keyword id="KW-0694">RNA-binding</keyword>
<keyword id="KW-0941">Suppressor of RNA silencing</keyword>
<keyword id="KW-0899">Viral immunoevasion</keyword>
<gene>
    <name type="ORF">ORF4</name>
</gene>
<feature type="chain" id="PRO_0000222880" description="RNA silencing suppressor p19">
    <location>
        <begin position="1"/>
        <end position="172"/>
    </location>
</feature>
<feature type="region of interest" description="Disordered" evidence="2">
    <location>
        <begin position="1"/>
        <end position="37"/>
    </location>
</feature>
<feature type="compositionally biased region" description="Basic and acidic residues" evidence="2">
    <location>
        <begin position="1"/>
        <end position="15"/>
    </location>
</feature>
<name>P19_TBSVB</name>
<protein>
    <recommendedName>
        <fullName>RNA silencing suppressor p19</fullName>
    </recommendedName>
    <alternativeName>
        <fullName>19 kDa symptom severity modulator</fullName>
    </alternativeName>
</protein>
<sequence length="172" mass="19451">MERAIQGNDAREQAYGERWNGGSGSSTSPFKLPDESPSWTEWRLHNDETISNQDNPLGFKESWGFGKVVFKRYLRYERTETSLHRVLGSWTGDSVNYAASRFLGFDQIGCTYSIRFRGVSVTISGGSRTLQHLSEMAIRSKQELLQLTPVEVESDVSRGCPEGIETFKEESE</sequence>
<proteinExistence type="inferred from homology"/>
<evidence type="ECO:0000250" key="1"/>
<evidence type="ECO:0000256" key="2">
    <source>
        <dbReference type="SAM" id="MobiDB-lite"/>
    </source>
</evidence>
<evidence type="ECO:0000305" key="3"/>
<dbReference type="EMBL" id="Z68895">
    <property type="protein sequence ID" value="CAA93124.1"/>
    <property type="molecule type" value="Genomic_RNA"/>
</dbReference>
<dbReference type="EMBL" id="Z68900">
    <property type="protein sequence ID" value="CAA93134.1"/>
    <property type="molecule type" value="Genomic_RNA"/>
</dbReference>
<dbReference type="EMBL" id="Z68902">
    <property type="protein sequence ID" value="CAA93138.1"/>
    <property type="molecule type" value="Genomic_RNA"/>
</dbReference>
<dbReference type="SMR" id="P50626"/>
<dbReference type="GO" id="GO:0044423">
    <property type="term" value="C:virion component"/>
    <property type="evidence" value="ECO:0007669"/>
    <property type="project" value="InterPro"/>
</dbReference>
<dbReference type="GO" id="GO:0003723">
    <property type="term" value="F:RNA binding"/>
    <property type="evidence" value="ECO:0007669"/>
    <property type="project" value="UniProtKB-KW"/>
</dbReference>
<dbReference type="GO" id="GO:0052170">
    <property type="term" value="P:symbiont-mediated suppression of host innate immune response"/>
    <property type="evidence" value="ECO:0007669"/>
    <property type="project" value="UniProtKB-KW"/>
</dbReference>
<dbReference type="Gene3D" id="3.30.390.180">
    <property type="entry name" value="RNA silencing suppressor P19"/>
    <property type="match status" value="1"/>
</dbReference>
<dbReference type="InterPro" id="IPR004905">
    <property type="entry name" value="Tombusvirus_p19"/>
</dbReference>
<dbReference type="InterPro" id="IPR036131">
    <property type="entry name" value="VP19_sf"/>
</dbReference>
<dbReference type="Pfam" id="PF03220">
    <property type="entry name" value="Tombus_P19"/>
    <property type="match status" value="1"/>
</dbReference>
<dbReference type="SUPFAM" id="SSF103145">
    <property type="entry name" value="Tombusvirus P19 core protein, VP19"/>
    <property type="match status" value="1"/>
</dbReference>
<accession>P50626</accession>
<reference key="1">
    <citation type="journal article" date="1996" name="Phytopathology">
        <title>Different tomato bushy stunt virus strains cause disease outbreaks on solanaceous crops in Spain.</title>
        <authorList>
            <person name="Luis-Areteaga M."/>
            <person name="Rodriguez-Cerezo E."/>
            <person name="Fraile A."/>
            <person name="Saez E."/>
            <person name="Garcia-Arenal F."/>
        </authorList>
        <dbReference type="AGRICOLA" id="IND20581771"/>
    </citation>
    <scope>NUCLEOTIDE SEQUENCE [GENOMIC RNA]</scope>
</reference>
<organismHost>
    <name type="scientific">Capsicum annuum</name>
    <name type="common">Capsicum pepper</name>
    <dbReference type="NCBI Taxonomy" id="4072"/>
</organismHost>
<organismHost>
    <name type="scientific">Malus</name>
    <dbReference type="NCBI Taxonomy" id="3749"/>
</organismHost>
<organismHost>
    <name type="scientific">Pyrus</name>
    <name type="common">pears</name>
    <dbReference type="NCBI Taxonomy" id="3766"/>
</organismHost>
<organismHost>
    <name type="scientific">Solanum lycopersicum</name>
    <name type="common">Tomato</name>
    <name type="synonym">Lycopersicon esculentum</name>
    <dbReference type="NCBI Taxonomy" id="4081"/>
</organismHost>
<organismHost>
    <name type="scientific">Solanum melongena</name>
    <name type="common">eggplant</name>
    <dbReference type="NCBI Taxonomy" id="4111"/>
</organismHost>
<organismHost>
    <name type="scientific">Tolmiea menziesii</name>
    <dbReference type="NCBI Taxonomy" id="29777"/>
</organismHost>
<organismHost>
    <name type="scientific">Tulipa</name>
    <dbReference type="NCBI Taxonomy" id="13305"/>
</organismHost>
<organism>
    <name type="scientific">Tomato bushy stunt virus (strain BS-3)</name>
    <name type="common">TBSV</name>
    <dbReference type="NCBI Taxonomy" id="12146"/>
    <lineage>
        <taxon>Viruses</taxon>
        <taxon>Riboviria</taxon>
        <taxon>Orthornavirae</taxon>
        <taxon>Kitrinoviricota</taxon>
        <taxon>Tolucaviricetes</taxon>
        <taxon>Tolivirales</taxon>
        <taxon>Tombusviridae</taxon>
        <taxon>Procedovirinae</taxon>
        <taxon>Tombusvirus</taxon>
        <taxon>Tombusvirus lycopersici</taxon>
    </lineage>
</organism>
<comment type="function">
    <text evidence="1">Viral suppressor of RNA silencing which binds specifically to silencing RNAs (siRNAs). Acts as a molecular caliper to specifically select siRNAs based on the length of the duplex region of the RNA (By similarity).</text>
</comment>
<comment type="subunit">
    <text evidence="1">Homodimer.</text>
</comment>
<comment type="similarity">
    <text evidence="3">Belongs to the tombusvirus protein p19 family.</text>
</comment>